<sequence>MTDRWLVTGAAGMLGRDLVALLRGLNEPVVAITRHDLDITDRLSVRAVVDRHRPTTIVNCAAWTRFGEAEAGESAALLVNGGGARELAAVCRDRSIRLVHLSTDYVFDGTSRRPYAESAVTSPINAYGRTKQAGEQAVLDLLPDDGTIVRTAWLYGRHGMNFIRKMVRLEQLRETVDVVDDQWGQPTWTVDLAQQIVALVRHGASGVFHGTSAGEATWYDLARMTFRLLGADPGRVRPVPSDRIAGGELRPRYTVLGHDAWREAGLTPIRHWTTALTQAFPLLNADES</sequence>
<evidence type="ECO:0000250" key="1">
    <source>
        <dbReference type="UniProtKB" id="P26392"/>
    </source>
</evidence>
<evidence type="ECO:0000269" key="2">
    <source>
    </source>
</evidence>
<evidence type="ECO:0000305" key="3"/>
<evidence type="ECO:0000305" key="4">
    <source>
    </source>
</evidence>
<gene>
    <name type="primary">novS</name>
</gene>
<protein>
    <recommendedName>
        <fullName>dTDP-4-keto-6-deoxy-D-glucose reductase</fullName>
        <ecNumber>1.1.1.-</ecNumber>
    </recommendedName>
    <alternativeName>
        <fullName>Novobiocin biosynthesis protein S</fullName>
    </alternativeName>
</protein>
<comment type="function">
    <text evidence="2">Reduces the product formed from the reaction of NovW with dTDP-4-keto-6-deoxy-D-glucose to result in dTDP-5-methyl-L-rhamnose in the novobiocin biosynthesis pathway, an aminocoumarin family antibiotic that targets bacterial DNA gyrases.</text>
</comment>
<comment type="cofactor">
    <cofactor evidence="4">
        <name>Mg(2+)</name>
        <dbReference type="ChEBI" id="CHEBI:18420"/>
    </cofactor>
    <text evidence="4">Binds 1 Mg(2+) ion per monomer.</text>
</comment>
<comment type="pathway">
    <text evidence="2">Antibiotic biosynthesis; novobiocin biosynthesis.</text>
</comment>
<comment type="similarity">
    <text evidence="3">Belongs to the dTDP-4-dehydrorhamnose reductase family.</text>
</comment>
<keyword id="KW-0045">Antibiotic biosynthesis</keyword>
<keyword id="KW-0460">Magnesium</keyword>
<keyword id="KW-0479">Metal-binding</keyword>
<keyword id="KW-0520">NAD</keyword>
<keyword id="KW-0521">NADP</keyword>
<keyword id="KW-0560">Oxidoreductase</keyword>
<accession>Q9L9E9</accession>
<reference key="1">
    <citation type="journal article" date="2000" name="Antimicrob. Agents Chemother.">
        <title>Identification of the novobiocin biosynthetic gene cluster of Streptomyces spheroides NCIB 11891.</title>
        <authorList>
            <person name="Steffensky M."/>
            <person name="Muhlenweg A."/>
            <person name="Wang Z.X."/>
            <person name="Li S.M."/>
            <person name="Heide L."/>
        </authorList>
    </citation>
    <scope>NUCLEOTIDE SEQUENCE [GENOMIC DNA]</scope>
    <source>
        <strain>ATCC 23965 / DSM 40292 / JCM 4252 / NBRC 12917 / NCIMB 11891 / NRRL 2449</strain>
    </source>
</reference>
<reference key="2">
    <citation type="journal article" date="2005" name="Arch. Biochem. Biophys.">
        <title>Functional characterizations of novWUS involved in novobiocin biosynthesis from Streptomyces spheroides.</title>
        <authorList>
            <person name="Thuy T.T."/>
            <person name="Lee H.C."/>
            <person name="Kim C.G."/>
            <person name="Heide L."/>
            <person name="Sohng J.K."/>
        </authorList>
    </citation>
    <scope>FUNCTION</scope>
    <scope>PATHWAY</scope>
    <scope>COFACTOR</scope>
    <source>
        <strain>ATCC 23965 / DSM 40292 / JCM 4252 / NBRC 12917 / NCIMB 11891 / NRRL 2449</strain>
    </source>
</reference>
<organism>
    <name type="scientific">Streptomyces niveus</name>
    <name type="common">Streptomyces spheroides</name>
    <dbReference type="NCBI Taxonomy" id="193462"/>
    <lineage>
        <taxon>Bacteria</taxon>
        <taxon>Bacillati</taxon>
        <taxon>Actinomycetota</taxon>
        <taxon>Actinomycetes</taxon>
        <taxon>Kitasatosporales</taxon>
        <taxon>Streptomycetaceae</taxon>
        <taxon>Streptomyces</taxon>
    </lineage>
</organism>
<dbReference type="EC" id="1.1.1.-"/>
<dbReference type="EMBL" id="AF170880">
    <property type="protein sequence ID" value="AAF67512.1"/>
    <property type="molecule type" value="Genomic_DNA"/>
</dbReference>
<dbReference type="RefSeq" id="WP_069626147.1">
    <property type="nucleotide sequence ID" value="NZ_JBFBIX010000004.1"/>
</dbReference>
<dbReference type="SMR" id="Q9L9E9"/>
<dbReference type="KEGG" id="ag:AAF67512"/>
<dbReference type="BioCyc" id="MetaCyc:MONOMER-18090"/>
<dbReference type="UniPathway" id="UPA01035"/>
<dbReference type="GO" id="GO:0005829">
    <property type="term" value="C:cytosol"/>
    <property type="evidence" value="ECO:0007669"/>
    <property type="project" value="TreeGrafter"/>
</dbReference>
<dbReference type="GO" id="GO:0008831">
    <property type="term" value="F:dTDP-4-dehydrorhamnose reductase activity"/>
    <property type="evidence" value="ECO:0007669"/>
    <property type="project" value="TreeGrafter"/>
</dbReference>
<dbReference type="GO" id="GO:0000287">
    <property type="term" value="F:magnesium ion binding"/>
    <property type="evidence" value="ECO:0000314"/>
    <property type="project" value="UniProtKB"/>
</dbReference>
<dbReference type="GO" id="GO:0016616">
    <property type="term" value="F:oxidoreductase activity, acting on the CH-OH group of donors, NAD or NADP as acceptor"/>
    <property type="evidence" value="ECO:0000314"/>
    <property type="project" value="UniProtKB"/>
</dbReference>
<dbReference type="GO" id="GO:0019305">
    <property type="term" value="P:dTDP-rhamnose biosynthetic process"/>
    <property type="evidence" value="ECO:0007669"/>
    <property type="project" value="TreeGrafter"/>
</dbReference>
<dbReference type="GO" id="GO:0043642">
    <property type="term" value="P:novobiocin biosynthetic process"/>
    <property type="evidence" value="ECO:0000314"/>
    <property type="project" value="UniProtKB"/>
</dbReference>
<dbReference type="CDD" id="cd05254">
    <property type="entry name" value="dTDP_HR_like_SDR_e"/>
    <property type="match status" value="1"/>
</dbReference>
<dbReference type="Gene3D" id="3.40.50.720">
    <property type="entry name" value="NAD(P)-binding Rossmann-like Domain"/>
    <property type="match status" value="1"/>
</dbReference>
<dbReference type="Gene3D" id="3.90.25.10">
    <property type="entry name" value="UDP-galactose 4-epimerase, domain 1"/>
    <property type="match status" value="1"/>
</dbReference>
<dbReference type="InterPro" id="IPR005913">
    <property type="entry name" value="dTDP_dehydrorham_reduct"/>
</dbReference>
<dbReference type="InterPro" id="IPR036291">
    <property type="entry name" value="NAD(P)-bd_dom_sf"/>
</dbReference>
<dbReference type="InterPro" id="IPR029903">
    <property type="entry name" value="RmlD-like-bd"/>
</dbReference>
<dbReference type="NCBIfam" id="TIGR01214">
    <property type="entry name" value="rmlD"/>
    <property type="match status" value="1"/>
</dbReference>
<dbReference type="PANTHER" id="PTHR10491">
    <property type="entry name" value="DTDP-4-DEHYDRORHAMNOSE REDUCTASE"/>
    <property type="match status" value="1"/>
</dbReference>
<dbReference type="PANTHER" id="PTHR10491:SF4">
    <property type="entry name" value="METHIONINE ADENOSYLTRANSFERASE 2 SUBUNIT BETA"/>
    <property type="match status" value="1"/>
</dbReference>
<dbReference type="Pfam" id="PF04321">
    <property type="entry name" value="RmlD_sub_bind"/>
    <property type="match status" value="1"/>
</dbReference>
<dbReference type="SUPFAM" id="SSF51735">
    <property type="entry name" value="NAD(P)-binding Rossmann-fold domains"/>
    <property type="match status" value="1"/>
</dbReference>
<proteinExistence type="inferred from homology"/>
<feature type="chain" id="PRO_0000424009" description="dTDP-4-keto-6-deoxy-D-glucose reductase">
    <location>
        <begin position="1"/>
        <end position="288"/>
    </location>
</feature>
<feature type="active site" description="Proton donor/acceptor" evidence="1">
    <location>
        <position position="127"/>
    </location>
</feature>
<feature type="binding site" evidence="1">
    <location>
        <begin position="12"/>
        <end position="14"/>
    </location>
    <ligand>
        <name>NADH</name>
        <dbReference type="ChEBI" id="CHEBI:57945"/>
    </ligand>
</feature>
<feature type="binding site" evidence="1">
    <location>
        <begin position="13"/>
        <end position="14"/>
    </location>
    <ligand>
        <name>NADPH</name>
        <dbReference type="ChEBI" id="CHEBI:57783"/>
    </ligand>
</feature>
<feature type="binding site" evidence="1">
    <location>
        <begin position="38"/>
        <end position="39"/>
    </location>
    <ligand>
        <name>NADH</name>
        <dbReference type="ChEBI" id="CHEBI:57945"/>
    </ligand>
</feature>
<feature type="binding site" evidence="1">
    <location>
        <begin position="38"/>
        <end position="39"/>
    </location>
    <ligand>
        <name>NADPH</name>
        <dbReference type="ChEBI" id="CHEBI:57783"/>
    </ligand>
</feature>
<feature type="binding site" evidence="1">
    <location>
        <begin position="62"/>
        <end position="64"/>
    </location>
    <ligand>
        <name>NADH</name>
        <dbReference type="ChEBI" id="CHEBI:57945"/>
    </ligand>
</feature>
<feature type="binding site" evidence="1">
    <location>
        <begin position="62"/>
        <end position="64"/>
    </location>
    <ligand>
        <name>NADPH</name>
        <dbReference type="ChEBI" id="CHEBI:57783"/>
    </ligand>
</feature>
<feature type="binding site" evidence="1">
    <location>
        <position position="127"/>
    </location>
    <ligand>
        <name>NADH</name>
        <dbReference type="ChEBI" id="CHEBI:57945"/>
    </ligand>
</feature>
<feature type="binding site" evidence="1">
    <location>
        <position position="127"/>
    </location>
    <ligand>
        <name>NADPH</name>
        <dbReference type="ChEBI" id="CHEBI:57783"/>
    </ligand>
</feature>
<feature type="binding site" evidence="1">
    <location>
        <position position="131"/>
    </location>
    <ligand>
        <name>NADH</name>
        <dbReference type="ChEBI" id="CHEBI:57945"/>
    </ligand>
</feature>
<feature type="binding site" evidence="1">
    <location>
        <position position="131"/>
    </location>
    <ligand>
        <name>NADPH</name>
        <dbReference type="ChEBI" id="CHEBI:57783"/>
    </ligand>
</feature>
<feature type="site" description="Could provide a fine-tuning to achieve optimal pKa matching between active site and substrate" evidence="1">
    <location>
        <position position="103"/>
    </location>
</feature>
<name>NOVS_STRNV</name>